<proteinExistence type="uncertain"/>
<comment type="caution">
    <text evidence="1">Product of a dubious CDS prediction. Encoded in intron of the NTM gene.</text>
</comment>
<dbReference type="EMBL" id="AK127362">
    <property type="protein sequence ID" value="BAC86944.1"/>
    <property type="molecule type" value="mRNA"/>
</dbReference>
<dbReference type="BioMuta" id="HGNC:32293"/>
<dbReference type="ProteomicsDB" id="68225"/>
<dbReference type="TopDownProteomics" id="Q6ZSK4"/>
<dbReference type="AGR" id="HGNC:32293"/>
<dbReference type="GeneCards" id="NTM-AS1"/>
<dbReference type="HGNC" id="HGNC:32293">
    <property type="gene designation" value="NTM-AS1"/>
</dbReference>
<dbReference type="neXtProt" id="NX_Q6ZSK4"/>
<dbReference type="InParanoid" id="Q6ZSK4"/>
<dbReference type="PAN-GO" id="Q6ZSK4">
    <property type="GO annotations" value="0 GO annotations based on evolutionary models"/>
</dbReference>
<dbReference type="PathwayCommons" id="Q6ZSK4"/>
<dbReference type="Pharos" id="Q6ZSK4">
    <property type="development level" value="Tdark"/>
</dbReference>
<dbReference type="Proteomes" id="UP000005640">
    <property type="component" value="Unplaced"/>
</dbReference>
<dbReference type="RNAct" id="Q6ZSK4">
    <property type="molecule type" value="protein"/>
</dbReference>
<protein>
    <recommendedName>
        <fullName evidence="1">Putative uncharacterized protein NTM-AS1</fullName>
    </recommendedName>
    <alternativeName>
        <fullName evidence="1">NTM antisense RNA 1</fullName>
    </alternativeName>
    <alternativeName>
        <fullName evidence="1">NTM antisense gene protein 1</fullName>
    </alternativeName>
</protein>
<sequence>MKGQEGIRGEGCTDPEIKASPQMWAARFRGMRSRFSPLFSQATEMGPRVSAGWCLSGGGRKVSSLQGDFPPGGFWALSNDSALSLPPLSLPHPHPLRPPGLGVNEFTQGLHPPLHPAASVFQTCFYRKPHYCSTLRPTTT</sequence>
<name>NTAS1_HUMAN</name>
<evidence type="ECO:0000305" key="1"/>
<evidence type="ECO:0000312" key="2">
    <source>
        <dbReference type="HGNC" id="HGNC:32293"/>
    </source>
</evidence>
<feature type="chain" id="PRO_0000274234" description="Putative uncharacterized protein NTM-AS1">
    <location>
        <begin position="1"/>
        <end position="140"/>
    </location>
</feature>
<keyword id="KW-1185">Reference proteome</keyword>
<reference key="1">
    <citation type="journal article" date="2004" name="Nat. Genet.">
        <title>Complete sequencing and characterization of 21,243 full-length human cDNAs.</title>
        <authorList>
            <person name="Ota T."/>
            <person name="Suzuki Y."/>
            <person name="Nishikawa T."/>
            <person name="Otsuki T."/>
            <person name="Sugiyama T."/>
            <person name="Irie R."/>
            <person name="Wakamatsu A."/>
            <person name="Hayashi K."/>
            <person name="Sato H."/>
            <person name="Nagai K."/>
            <person name="Kimura K."/>
            <person name="Makita H."/>
            <person name="Sekine M."/>
            <person name="Obayashi M."/>
            <person name="Nishi T."/>
            <person name="Shibahara T."/>
            <person name="Tanaka T."/>
            <person name="Ishii S."/>
            <person name="Yamamoto J."/>
            <person name="Saito K."/>
            <person name="Kawai Y."/>
            <person name="Isono Y."/>
            <person name="Nakamura Y."/>
            <person name="Nagahari K."/>
            <person name="Murakami K."/>
            <person name="Yasuda T."/>
            <person name="Iwayanagi T."/>
            <person name="Wagatsuma M."/>
            <person name="Shiratori A."/>
            <person name="Sudo H."/>
            <person name="Hosoiri T."/>
            <person name="Kaku Y."/>
            <person name="Kodaira H."/>
            <person name="Kondo H."/>
            <person name="Sugawara M."/>
            <person name="Takahashi M."/>
            <person name="Kanda K."/>
            <person name="Yokoi T."/>
            <person name="Furuya T."/>
            <person name="Kikkawa E."/>
            <person name="Omura Y."/>
            <person name="Abe K."/>
            <person name="Kamihara K."/>
            <person name="Katsuta N."/>
            <person name="Sato K."/>
            <person name="Tanikawa M."/>
            <person name="Yamazaki M."/>
            <person name="Ninomiya K."/>
            <person name="Ishibashi T."/>
            <person name="Yamashita H."/>
            <person name="Murakawa K."/>
            <person name="Fujimori K."/>
            <person name="Tanai H."/>
            <person name="Kimata M."/>
            <person name="Watanabe M."/>
            <person name="Hiraoka S."/>
            <person name="Chiba Y."/>
            <person name="Ishida S."/>
            <person name="Ono Y."/>
            <person name="Takiguchi S."/>
            <person name="Watanabe S."/>
            <person name="Yosida M."/>
            <person name="Hotuta T."/>
            <person name="Kusano J."/>
            <person name="Kanehori K."/>
            <person name="Takahashi-Fujii A."/>
            <person name="Hara H."/>
            <person name="Tanase T.-O."/>
            <person name="Nomura Y."/>
            <person name="Togiya S."/>
            <person name="Komai F."/>
            <person name="Hara R."/>
            <person name="Takeuchi K."/>
            <person name="Arita M."/>
            <person name="Imose N."/>
            <person name="Musashino K."/>
            <person name="Yuuki H."/>
            <person name="Oshima A."/>
            <person name="Sasaki N."/>
            <person name="Aotsuka S."/>
            <person name="Yoshikawa Y."/>
            <person name="Matsunawa H."/>
            <person name="Ichihara T."/>
            <person name="Shiohata N."/>
            <person name="Sano S."/>
            <person name="Moriya S."/>
            <person name="Momiyama H."/>
            <person name="Satoh N."/>
            <person name="Takami S."/>
            <person name="Terashima Y."/>
            <person name="Suzuki O."/>
            <person name="Nakagawa S."/>
            <person name="Senoh A."/>
            <person name="Mizoguchi H."/>
            <person name="Goto Y."/>
            <person name="Shimizu F."/>
            <person name="Wakebe H."/>
            <person name="Hishigaki H."/>
            <person name="Watanabe T."/>
            <person name="Sugiyama A."/>
            <person name="Takemoto M."/>
            <person name="Kawakami B."/>
            <person name="Yamazaki M."/>
            <person name="Watanabe K."/>
            <person name="Kumagai A."/>
            <person name="Itakura S."/>
            <person name="Fukuzumi Y."/>
            <person name="Fujimori Y."/>
            <person name="Komiyama M."/>
            <person name="Tashiro H."/>
            <person name="Tanigami A."/>
            <person name="Fujiwara T."/>
            <person name="Ono T."/>
            <person name="Yamada K."/>
            <person name="Fujii Y."/>
            <person name="Ozaki K."/>
            <person name="Hirao M."/>
            <person name="Ohmori Y."/>
            <person name="Kawabata A."/>
            <person name="Hikiji T."/>
            <person name="Kobatake N."/>
            <person name="Inagaki H."/>
            <person name="Ikema Y."/>
            <person name="Okamoto S."/>
            <person name="Okitani R."/>
            <person name="Kawakami T."/>
            <person name="Noguchi S."/>
            <person name="Itoh T."/>
            <person name="Shigeta K."/>
            <person name="Senba T."/>
            <person name="Matsumura K."/>
            <person name="Nakajima Y."/>
            <person name="Mizuno T."/>
            <person name="Morinaga M."/>
            <person name="Sasaki M."/>
            <person name="Togashi T."/>
            <person name="Oyama M."/>
            <person name="Hata H."/>
            <person name="Watanabe M."/>
            <person name="Komatsu T."/>
            <person name="Mizushima-Sugano J."/>
            <person name="Satoh T."/>
            <person name="Shirai Y."/>
            <person name="Takahashi Y."/>
            <person name="Nakagawa K."/>
            <person name="Okumura K."/>
            <person name="Nagase T."/>
            <person name="Nomura N."/>
            <person name="Kikuchi H."/>
            <person name="Masuho Y."/>
            <person name="Yamashita R."/>
            <person name="Nakai K."/>
            <person name="Yada T."/>
            <person name="Nakamura Y."/>
            <person name="Ohara O."/>
            <person name="Isogai T."/>
            <person name="Sugano S."/>
        </authorList>
    </citation>
    <scope>NUCLEOTIDE SEQUENCE [LARGE SCALE MRNA]</scope>
    <source>
        <tissue>Hippocampus</tissue>
    </source>
</reference>
<accession>Q6ZSK4</accession>
<gene>
    <name evidence="2" type="primary">NTM-AS1</name>
    <name type="synonym">C11orf39</name>
</gene>
<organism>
    <name type="scientific">Homo sapiens</name>
    <name type="common">Human</name>
    <dbReference type="NCBI Taxonomy" id="9606"/>
    <lineage>
        <taxon>Eukaryota</taxon>
        <taxon>Metazoa</taxon>
        <taxon>Chordata</taxon>
        <taxon>Craniata</taxon>
        <taxon>Vertebrata</taxon>
        <taxon>Euteleostomi</taxon>
        <taxon>Mammalia</taxon>
        <taxon>Eutheria</taxon>
        <taxon>Euarchontoglires</taxon>
        <taxon>Primates</taxon>
        <taxon>Haplorrhini</taxon>
        <taxon>Catarrhini</taxon>
        <taxon>Hominidae</taxon>
        <taxon>Homo</taxon>
    </lineage>
</organism>